<organism>
    <name type="scientific">Danio rerio</name>
    <name type="common">Zebrafish</name>
    <name type="synonym">Brachydanio rerio</name>
    <dbReference type="NCBI Taxonomy" id="7955"/>
    <lineage>
        <taxon>Eukaryota</taxon>
        <taxon>Metazoa</taxon>
        <taxon>Chordata</taxon>
        <taxon>Craniata</taxon>
        <taxon>Vertebrata</taxon>
        <taxon>Euteleostomi</taxon>
        <taxon>Actinopterygii</taxon>
        <taxon>Neopterygii</taxon>
        <taxon>Teleostei</taxon>
        <taxon>Ostariophysi</taxon>
        <taxon>Cypriniformes</taxon>
        <taxon>Danionidae</taxon>
        <taxon>Danioninae</taxon>
        <taxon>Danio</taxon>
    </lineage>
</organism>
<reference evidence="4 5" key="1">
    <citation type="journal article" date="1999" name="Development">
        <title>Ontogeny and behaviour of early macrophages in the zebrafish embryo.</title>
        <authorList>
            <person name="Herbomel P."/>
            <person name="Thisse B."/>
            <person name="Thisse C."/>
        </authorList>
    </citation>
    <scope>NUCLEOTIDE SEQUENCE [MRNA]</scope>
    <scope>TISSUE SPECIFICITY</scope>
    <source>
        <tissue>Blood</tissue>
        <tissue>Embryo</tissue>
    </source>
</reference>
<reference key="2">
    <citation type="journal article" date="2013" name="Nature">
        <title>The zebrafish reference genome sequence and its relationship to the human genome.</title>
        <authorList>
            <person name="Howe K."/>
            <person name="Clark M.D."/>
            <person name="Torroja C.F."/>
            <person name="Torrance J."/>
            <person name="Berthelot C."/>
            <person name="Muffato M."/>
            <person name="Collins J.E."/>
            <person name="Humphray S."/>
            <person name="McLaren K."/>
            <person name="Matthews L."/>
            <person name="McLaren S."/>
            <person name="Sealy I."/>
            <person name="Caccamo M."/>
            <person name="Churcher C."/>
            <person name="Scott C."/>
            <person name="Barrett J.C."/>
            <person name="Koch R."/>
            <person name="Rauch G.J."/>
            <person name="White S."/>
            <person name="Chow W."/>
            <person name="Kilian B."/>
            <person name="Quintais L.T."/>
            <person name="Guerra-Assuncao J.A."/>
            <person name="Zhou Y."/>
            <person name="Gu Y."/>
            <person name="Yen J."/>
            <person name="Vogel J.H."/>
            <person name="Eyre T."/>
            <person name="Redmond S."/>
            <person name="Banerjee R."/>
            <person name="Chi J."/>
            <person name="Fu B."/>
            <person name="Langley E."/>
            <person name="Maguire S.F."/>
            <person name="Laird G.K."/>
            <person name="Lloyd D."/>
            <person name="Kenyon E."/>
            <person name="Donaldson S."/>
            <person name="Sehra H."/>
            <person name="Almeida-King J."/>
            <person name="Loveland J."/>
            <person name="Trevanion S."/>
            <person name="Jones M."/>
            <person name="Quail M."/>
            <person name="Willey D."/>
            <person name="Hunt A."/>
            <person name="Burton J."/>
            <person name="Sims S."/>
            <person name="McLay K."/>
            <person name="Plumb B."/>
            <person name="Davis J."/>
            <person name="Clee C."/>
            <person name="Oliver K."/>
            <person name="Clark R."/>
            <person name="Riddle C."/>
            <person name="Elliot D."/>
            <person name="Threadgold G."/>
            <person name="Harden G."/>
            <person name="Ware D."/>
            <person name="Begum S."/>
            <person name="Mortimore B."/>
            <person name="Kerry G."/>
            <person name="Heath P."/>
            <person name="Phillimore B."/>
            <person name="Tracey A."/>
            <person name="Corby N."/>
            <person name="Dunn M."/>
            <person name="Johnson C."/>
            <person name="Wood J."/>
            <person name="Clark S."/>
            <person name="Pelan S."/>
            <person name="Griffiths G."/>
            <person name="Smith M."/>
            <person name="Glithero R."/>
            <person name="Howden P."/>
            <person name="Barker N."/>
            <person name="Lloyd C."/>
            <person name="Stevens C."/>
            <person name="Harley J."/>
            <person name="Holt K."/>
            <person name="Panagiotidis G."/>
            <person name="Lovell J."/>
            <person name="Beasley H."/>
            <person name="Henderson C."/>
            <person name="Gordon D."/>
            <person name="Auger K."/>
            <person name="Wright D."/>
            <person name="Collins J."/>
            <person name="Raisen C."/>
            <person name="Dyer L."/>
            <person name="Leung K."/>
            <person name="Robertson L."/>
            <person name="Ambridge K."/>
            <person name="Leongamornlert D."/>
            <person name="McGuire S."/>
            <person name="Gilderthorp R."/>
            <person name="Griffiths C."/>
            <person name="Manthravadi D."/>
            <person name="Nichol S."/>
            <person name="Barker G."/>
            <person name="Whitehead S."/>
            <person name="Kay M."/>
            <person name="Brown J."/>
            <person name="Murnane C."/>
            <person name="Gray E."/>
            <person name="Humphries M."/>
            <person name="Sycamore N."/>
            <person name="Barker D."/>
            <person name="Saunders D."/>
            <person name="Wallis J."/>
            <person name="Babbage A."/>
            <person name="Hammond S."/>
            <person name="Mashreghi-Mohammadi M."/>
            <person name="Barr L."/>
            <person name="Martin S."/>
            <person name="Wray P."/>
            <person name="Ellington A."/>
            <person name="Matthews N."/>
            <person name="Ellwood M."/>
            <person name="Woodmansey R."/>
            <person name="Clark G."/>
            <person name="Cooper J."/>
            <person name="Tromans A."/>
            <person name="Grafham D."/>
            <person name="Skuce C."/>
            <person name="Pandian R."/>
            <person name="Andrews R."/>
            <person name="Harrison E."/>
            <person name="Kimberley A."/>
            <person name="Garnett J."/>
            <person name="Fosker N."/>
            <person name="Hall R."/>
            <person name="Garner P."/>
            <person name="Kelly D."/>
            <person name="Bird C."/>
            <person name="Palmer S."/>
            <person name="Gehring I."/>
            <person name="Berger A."/>
            <person name="Dooley C.M."/>
            <person name="Ersan-Urun Z."/>
            <person name="Eser C."/>
            <person name="Geiger H."/>
            <person name="Geisler M."/>
            <person name="Karotki L."/>
            <person name="Kirn A."/>
            <person name="Konantz J."/>
            <person name="Konantz M."/>
            <person name="Oberlander M."/>
            <person name="Rudolph-Geiger S."/>
            <person name="Teucke M."/>
            <person name="Lanz C."/>
            <person name="Raddatz G."/>
            <person name="Osoegawa K."/>
            <person name="Zhu B."/>
            <person name="Rapp A."/>
            <person name="Widaa S."/>
            <person name="Langford C."/>
            <person name="Yang F."/>
            <person name="Schuster S.C."/>
            <person name="Carter N.P."/>
            <person name="Harrow J."/>
            <person name="Ning Z."/>
            <person name="Herrero J."/>
            <person name="Searle S.M."/>
            <person name="Enright A."/>
            <person name="Geisler R."/>
            <person name="Plasterk R.H."/>
            <person name="Lee C."/>
            <person name="Westerfield M."/>
            <person name="de Jong P.J."/>
            <person name="Zon L.I."/>
            <person name="Postlethwait J.H."/>
            <person name="Nusslein-Volhard C."/>
            <person name="Hubbard T.J."/>
            <person name="Roest Crollius H."/>
            <person name="Rogers J."/>
            <person name="Stemple D.L."/>
        </authorList>
    </citation>
    <scope>NUCLEOTIDE SEQUENCE [LARGE SCALE GENOMIC DNA]</scope>
    <source>
        <strain>Tuebingen</strain>
    </source>
</reference>
<gene>
    <name evidence="6" type="primary">drl</name>
    <name type="synonym">dra</name>
    <name type="ORF">si:dkey-261j4.2</name>
</gene>
<protein>
    <recommendedName>
        <fullName>Zinc finger protein draculin</fullName>
    </recommendedName>
</protein>
<keyword id="KW-0217">Developmental protein</keyword>
<keyword id="KW-0479">Metal-binding</keyword>
<keyword id="KW-1185">Reference proteome</keyword>
<keyword id="KW-0677">Repeat</keyword>
<keyword id="KW-0862">Zinc</keyword>
<keyword id="KW-0863">Zinc-finger</keyword>
<proteinExistence type="evidence at transcript level"/>
<feature type="chain" id="PRO_0000046936" description="Zinc finger protein draculin">
    <location>
        <begin position="1"/>
        <end position="411"/>
    </location>
</feature>
<feature type="zinc finger region" description="C2H2-type 1" evidence="1">
    <location>
        <begin position="36"/>
        <end position="58"/>
    </location>
</feature>
<feature type="zinc finger region" description="C2H2-type 2" evidence="1">
    <location>
        <begin position="64"/>
        <end position="86"/>
    </location>
</feature>
<feature type="zinc finger region" description="C2H2-type 3" evidence="1">
    <location>
        <begin position="92"/>
        <end position="114"/>
    </location>
</feature>
<feature type="zinc finger region" description="C2H2-type 4" evidence="1">
    <location>
        <begin position="120"/>
        <end position="142"/>
    </location>
</feature>
<feature type="zinc finger region" description="C2H2-type 5" evidence="1">
    <location>
        <begin position="148"/>
        <end position="170"/>
    </location>
</feature>
<feature type="zinc finger region" description="C2H2-type 6" evidence="1">
    <location>
        <begin position="176"/>
        <end position="198"/>
    </location>
</feature>
<feature type="zinc finger region" description="C2H2-type 7" evidence="1">
    <location>
        <begin position="204"/>
        <end position="226"/>
    </location>
</feature>
<feature type="zinc finger region" description="C2H2-type 8" evidence="1">
    <location>
        <begin position="232"/>
        <end position="254"/>
    </location>
</feature>
<feature type="zinc finger region" description="C2H2-type 9" evidence="1">
    <location>
        <begin position="260"/>
        <end position="282"/>
    </location>
</feature>
<feature type="zinc finger region" description="C2H2-type 10" evidence="1">
    <location>
        <begin position="288"/>
        <end position="310"/>
    </location>
</feature>
<feature type="zinc finger region" description="C2H2-type 11" evidence="1">
    <location>
        <begin position="316"/>
        <end position="338"/>
    </location>
</feature>
<feature type="zinc finger region" description="C2H2-type 12" evidence="1">
    <location>
        <begin position="344"/>
        <end position="366"/>
    </location>
</feature>
<feature type="zinc finger region" description="C2H2-type 13" evidence="1">
    <location>
        <begin position="372"/>
        <end position="394"/>
    </location>
</feature>
<feature type="region of interest" description="Disordered" evidence="2">
    <location>
        <begin position="1"/>
        <end position="33"/>
    </location>
</feature>
<feature type="compositionally biased region" description="Basic and acidic residues" evidence="2">
    <location>
        <begin position="8"/>
        <end position="32"/>
    </location>
</feature>
<feature type="sequence conflict" description="In Ref. 1; AAD40679." evidence="4" ref="1">
    <original>S</original>
    <variation>T</variation>
    <location>
        <position position="46"/>
    </location>
</feature>
<feature type="sequence conflict" description="In Ref. 1; AAD40679." evidence="4" ref="1">
    <original>A</original>
    <variation>V</variation>
    <location>
        <position position="49"/>
    </location>
</feature>
<comment type="tissue specificity">
    <text evidence="3">Specifically expressed in the hematopoietic lineage during embryogenesis; first expressed at the late blastula stage around the blastoderm margin. During gastrulation, restricted to the ventral mesoderm, the presumptive prechordal plate and the dorso-marginal cells of the organizer. At the 3-somite stage, strongly expressed in a caudal domain (marking the erythroid lineage) and a cephalic domain of the lateral mesoderm. At the 8- to 10-somite stage, caudal expression is in two bands of lateral mesoderm which later converge at the midline. Anterior expression is also in two bands of lateral mesoderm which converge as two patches at the midline by the 15-somite stage, with increased scattering of single cells (macrophage precursors) away from the midline to the yolksac. Once at the yolksac, expression is lost. By 20-24 hours post-fertilization (hpf), expressed in proerythroblasts in the erythroid blood island centered above the uro-genital opening. Expression persists in circulating erythroblasts but is lost in mature erythrocytes.</text>
</comment>
<evidence type="ECO:0000255" key="1">
    <source>
        <dbReference type="PROSITE-ProRule" id="PRU00042"/>
    </source>
</evidence>
<evidence type="ECO:0000256" key="2">
    <source>
        <dbReference type="SAM" id="MobiDB-lite"/>
    </source>
</evidence>
<evidence type="ECO:0000269" key="3">
    <source>
    </source>
</evidence>
<evidence type="ECO:0000305" key="4"/>
<evidence type="ECO:0000312" key="5">
    <source>
        <dbReference type="EMBL" id="AAD40679.1"/>
    </source>
</evidence>
<evidence type="ECO:0000312" key="6">
    <source>
        <dbReference type="ZFIN" id="ZDB-GENE-991213-3"/>
    </source>
</evidence>
<sequence length="411" mass="48030">MKNTTKPCRTEHHNAEGQRDRMEGNKKGETKAKKSVACSHCKKRFSHKAHLQIHMRVHTGEKPYRCDQCGKCFPYKQSLKLHLDIHAKGNPYTCDECGESFKTRLQLRSHMTLHPKYKPYKCDQCEKSYGREDHLQRHMKLHTGEKPHKCEHCGKSFPMRDLLRSHLMVHSEVKPYTCDQCGKGFTLKKSYNEHMNIHTGERPYTCDQCGKGFPYEQSLNLHMRFHREEKPFTCDQCGQSFSQKGAYNIHMKIHTGEKPYTCDQCGMSFRHGYSLKLHMTHHTGEKPFHCDQCDKCYSTALFLKNHIKTHDKAQIYSCLTCGKTFNQLRGLRLHEKRHSLTKPFMCFDCGKCYFTDTELKQHLPVHSNERPYMCSLCFKSFPRMGSLIVHEKTHNGEKPDCRTGSKKSQDE</sequence>
<name>DRL_DANRE</name>
<accession>Q9W747</accession>
<accession>B0R153</accession>
<accession>Q504H6</accession>
<dbReference type="EMBL" id="AF157109">
    <property type="protein sequence ID" value="AAD40679.1"/>
    <property type="molecule type" value="mRNA"/>
</dbReference>
<dbReference type="EMBL" id="AL935280">
    <property type="protein sequence ID" value="CAQ13760.1"/>
    <property type="molecule type" value="Genomic_DNA"/>
</dbReference>
<dbReference type="RefSeq" id="NP_571052.2">
    <property type="nucleotide sequence ID" value="NM_130977.2"/>
</dbReference>
<dbReference type="SMR" id="Q9W747"/>
<dbReference type="STRING" id="7955.ENSDARP00000088134"/>
<dbReference type="PaxDb" id="7955-ENSDARP00000088134"/>
<dbReference type="Ensembl" id="ENSDART00000097364">
    <property type="protein sequence ID" value="ENSDARP00000088134"/>
    <property type="gene ID" value="ENSDARG00000078004"/>
</dbReference>
<dbReference type="GeneID" id="30167"/>
<dbReference type="KEGG" id="dre:30167"/>
<dbReference type="AGR" id="ZFIN:ZDB-GENE-991213-3"/>
<dbReference type="CTD" id="30167"/>
<dbReference type="ZFIN" id="ZDB-GENE-991213-3">
    <property type="gene designation" value="drl"/>
</dbReference>
<dbReference type="eggNOG" id="KOG1721">
    <property type="taxonomic scope" value="Eukaryota"/>
</dbReference>
<dbReference type="HOGENOM" id="CLU_002678_44_0_1"/>
<dbReference type="InParanoid" id="Q9W747"/>
<dbReference type="OrthoDB" id="1095242at2759"/>
<dbReference type="PhylomeDB" id="Q9W747"/>
<dbReference type="TreeFam" id="TF334420"/>
<dbReference type="PRO" id="PR:Q9W747"/>
<dbReference type="Proteomes" id="UP000000437">
    <property type="component" value="Chromosome 5"/>
</dbReference>
<dbReference type="Bgee" id="ENSDARG00000078004">
    <property type="expression patterns" value="Expressed in ventral mesoderm and 28 other cell types or tissues"/>
</dbReference>
<dbReference type="GO" id="GO:0005634">
    <property type="term" value="C:nucleus"/>
    <property type="evidence" value="ECO:0000318"/>
    <property type="project" value="GO_Central"/>
</dbReference>
<dbReference type="GO" id="GO:0003677">
    <property type="term" value="F:DNA binding"/>
    <property type="evidence" value="ECO:0000303"/>
    <property type="project" value="ZFIN"/>
</dbReference>
<dbReference type="GO" id="GO:0000981">
    <property type="term" value="F:DNA-binding transcription factor activity, RNA polymerase II-specific"/>
    <property type="evidence" value="ECO:0000318"/>
    <property type="project" value="GO_Central"/>
</dbReference>
<dbReference type="GO" id="GO:0000977">
    <property type="term" value="F:RNA polymerase II transcription regulatory region sequence-specific DNA binding"/>
    <property type="evidence" value="ECO:0000318"/>
    <property type="project" value="GO_Central"/>
</dbReference>
<dbReference type="GO" id="GO:0008270">
    <property type="term" value="F:zinc ion binding"/>
    <property type="evidence" value="ECO:0007669"/>
    <property type="project" value="UniProtKB-KW"/>
</dbReference>
<dbReference type="GO" id="GO:0001702">
    <property type="term" value="P:gastrulation with mouth forming second"/>
    <property type="evidence" value="ECO:0000270"/>
    <property type="project" value="ZFIN"/>
</dbReference>
<dbReference type="GO" id="GO:0006357">
    <property type="term" value="P:regulation of transcription by RNA polymerase II"/>
    <property type="evidence" value="ECO:0000318"/>
    <property type="project" value="GO_Central"/>
</dbReference>
<dbReference type="FunFam" id="3.30.160.60:FF:004653">
    <property type="match status" value="1"/>
</dbReference>
<dbReference type="FunFam" id="3.30.160.60:FF:003012">
    <property type="entry name" value="Draculin-like 1"/>
    <property type="match status" value="1"/>
</dbReference>
<dbReference type="FunFam" id="3.30.160.60:FF:003110">
    <property type="entry name" value="Draculin-like 3"/>
    <property type="match status" value="1"/>
</dbReference>
<dbReference type="FunFam" id="3.30.160.60:FF:000100">
    <property type="entry name" value="Zinc finger 45-like"/>
    <property type="match status" value="1"/>
</dbReference>
<dbReference type="FunFam" id="3.30.160.60:FF:000765">
    <property type="entry name" value="Zinc finger 45-like"/>
    <property type="match status" value="2"/>
</dbReference>
<dbReference type="FunFam" id="3.30.160.60:FF:000671">
    <property type="entry name" value="Zinc finger protein 26"/>
    <property type="match status" value="1"/>
</dbReference>
<dbReference type="FunFam" id="3.30.160.60:FF:000414">
    <property type="entry name" value="Zinc finger protein 398"/>
    <property type="match status" value="1"/>
</dbReference>
<dbReference type="FunFam" id="3.30.160.60:FF:002333">
    <property type="entry name" value="Zinc finger protein 668"/>
    <property type="match status" value="1"/>
</dbReference>
<dbReference type="FunFam" id="3.30.160.60:FF:000624">
    <property type="entry name" value="zinc finger protein 697"/>
    <property type="match status" value="1"/>
</dbReference>
<dbReference type="FunFam" id="3.30.160.60:FF:000110">
    <property type="entry name" value="Zinc finger protein-like"/>
    <property type="match status" value="1"/>
</dbReference>
<dbReference type="Gene3D" id="3.30.160.60">
    <property type="entry name" value="Classic Zinc Finger"/>
    <property type="match status" value="13"/>
</dbReference>
<dbReference type="InterPro" id="IPR050758">
    <property type="entry name" value="Znf_C2H2-type"/>
</dbReference>
<dbReference type="InterPro" id="IPR036236">
    <property type="entry name" value="Znf_C2H2_sf"/>
</dbReference>
<dbReference type="InterPro" id="IPR013087">
    <property type="entry name" value="Znf_C2H2_type"/>
</dbReference>
<dbReference type="PANTHER" id="PTHR23234:SF10">
    <property type="entry name" value="RIKEN CDNA 6720489N17 GENE-RELATED"/>
    <property type="match status" value="1"/>
</dbReference>
<dbReference type="PANTHER" id="PTHR23234">
    <property type="entry name" value="ZNF44 PROTEIN"/>
    <property type="match status" value="1"/>
</dbReference>
<dbReference type="Pfam" id="PF00096">
    <property type="entry name" value="zf-C2H2"/>
    <property type="match status" value="11"/>
</dbReference>
<dbReference type="Pfam" id="PF13912">
    <property type="entry name" value="zf-C2H2_6"/>
    <property type="match status" value="1"/>
</dbReference>
<dbReference type="SMART" id="SM00355">
    <property type="entry name" value="ZnF_C2H2"/>
    <property type="match status" value="13"/>
</dbReference>
<dbReference type="SUPFAM" id="SSF57667">
    <property type="entry name" value="beta-beta-alpha zinc fingers"/>
    <property type="match status" value="7"/>
</dbReference>
<dbReference type="PROSITE" id="PS00028">
    <property type="entry name" value="ZINC_FINGER_C2H2_1"/>
    <property type="match status" value="13"/>
</dbReference>
<dbReference type="PROSITE" id="PS50157">
    <property type="entry name" value="ZINC_FINGER_C2H2_2"/>
    <property type="match status" value="13"/>
</dbReference>